<name>CDC6_THEVO</name>
<feature type="chain" id="PRO_0000151025" description="ORC1-type DNA replication protein">
    <location>
        <begin position="1"/>
        <end position="404"/>
    </location>
</feature>
<feature type="binding site" evidence="1">
    <location>
        <begin position="64"/>
        <end position="68"/>
    </location>
    <ligand>
        <name>ATP</name>
        <dbReference type="ChEBI" id="CHEBI:30616"/>
    </ligand>
</feature>
<feature type="binding site" evidence="1">
    <location>
        <position position="205"/>
    </location>
    <ligand>
        <name>ATP</name>
        <dbReference type="ChEBI" id="CHEBI:30616"/>
    </ligand>
</feature>
<feature type="binding site" evidence="1">
    <location>
        <position position="217"/>
    </location>
    <ligand>
        <name>ATP</name>
        <dbReference type="ChEBI" id="CHEBI:30616"/>
    </ligand>
</feature>
<dbReference type="EMBL" id="BA000011">
    <property type="protein sequence ID" value="BAB59911.1"/>
    <property type="status" value="ALT_INIT"/>
    <property type="molecule type" value="Genomic_DNA"/>
</dbReference>
<dbReference type="RefSeq" id="WP_010917016.1">
    <property type="nucleotide sequence ID" value="NC_002689.2"/>
</dbReference>
<dbReference type="SMR" id="Q97AP1"/>
<dbReference type="STRING" id="273116.gene:9381559"/>
<dbReference type="PaxDb" id="273116-14324985"/>
<dbReference type="DNASU" id="1441864"/>
<dbReference type="GeneID" id="1441864"/>
<dbReference type="KEGG" id="tvo:TVG0773033"/>
<dbReference type="eggNOG" id="arCOG00467">
    <property type="taxonomic scope" value="Archaea"/>
</dbReference>
<dbReference type="HOGENOM" id="CLU_025112_3_1_2"/>
<dbReference type="OrthoDB" id="195574at2157"/>
<dbReference type="PhylomeDB" id="Q97AP1"/>
<dbReference type="Proteomes" id="UP000001017">
    <property type="component" value="Chromosome"/>
</dbReference>
<dbReference type="GO" id="GO:0005524">
    <property type="term" value="F:ATP binding"/>
    <property type="evidence" value="ECO:0007669"/>
    <property type="project" value="UniProtKB-UniRule"/>
</dbReference>
<dbReference type="GO" id="GO:0016887">
    <property type="term" value="F:ATP hydrolysis activity"/>
    <property type="evidence" value="ECO:0007669"/>
    <property type="project" value="InterPro"/>
</dbReference>
<dbReference type="GO" id="GO:0006260">
    <property type="term" value="P:DNA replication"/>
    <property type="evidence" value="ECO:0007669"/>
    <property type="project" value="UniProtKB-UniRule"/>
</dbReference>
<dbReference type="CDD" id="cd08768">
    <property type="entry name" value="Cdc6_C"/>
    <property type="match status" value="1"/>
</dbReference>
<dbReference type="FunFam" id="1.10.8.60:FF:000073">
    <property type="entry name" value="ORC1-type DNA replication protein"/>
    <property type="match status" value="1"/>
</dbReference>
<dbReference type="Gene3D" id="1.10.8.60">
    <property type="match status" value="1"/>
</dbReference>
<dbReference type="Gene3D" id="3.40.50.300">
    <property type="entry name" value="P-loop containing nucleotide triphosphate hydrolases"/>
    <property type="match status" value="1"/>
</dbReference>
<dbReference type="Gene3D" id="1.10.10.10">
    <property type="entry name" value="Winged helix-like DNA-binding domain superfamily/Winged helix DNA-binding domain"/>
    <property type="match status" value="1"/>
</dbReference>
<dbReference type="HAMAP" id="MF_01407">
    <property type="entry name" value="ORC1_type_DNA_replic_protein"/>
    <property type="match status" value="1"/>
</dbReference>
<dbReference type="InterPro" id="IPR003593">
    <property type="entry name" value="AAA+_ATPase"/>
</dbReference>
<dbReference type="InterPro" id="IPR049945">
    <property type="entry name" value="AAA_22"/>
</dbReference>
<dbReference type="InterPro" id="IPR015163">
    <property type="entry name" value="Cdc6_C"/>
</dbReference>
<dbReference type="InterPro" id="IPR055237">
    <property type="entry name" value="Cdc6_lid"/>
</dbReference>
<dbReference type="InterPro" id="IPR050311">
    <property type="entry name" value="ORC1/CDC6"/>
</dbReference>
<dbReference type="InterPro" id="IPR014277">
    <property type="entry name" value="Orc1/Cdc6_arc"/>
</dbReference>
<dbReference type="InterPro" id="IPR027417">
    <property type="entry name" value="P-loop_NTPase"/>
</dbReference>
<dbReference type="InterPro" id="IPR036388">
    <property type="entry name" value="WH-like_DNA-bd_sf"/>
</dbReference>
<dbReference type="InterPro" id="IPR036390">
    <property type="entry name" value="WH_DNA-bd_sf"/>
</dbReference>
<dbReference type="NCBIfam" id="TIGR02928">
    <property type="entry name" value="orc1/cdc6 family replication initiation protein"/>
    <property type="match status" value="1"/>
</dbReference>
<dbReference type="NCBIfam" id="NF001625">
    <property type="entry name" value="PRK00411.1-3"/>
    <property type="match status" value="1"/>
</dbReference>
<dbReference type="PANTHER" id="PTHR10763">
    <property type="entry name" value="CELL DIVISION CONTROL PROTEIN 6-RELATED"/>
    <property type="match status" value="1"/>
</dbReference>
<dbReference type="PANTHER" id="PTHR10763:SF22">
    <property type="entry name" value="ORC1-TYPE DNA REPLICATION PROTEIN"/>
    <property type="match status" value="1"/>
</dbReference>
<dbReference type="Pfam" id="PF13401">
    <property type="entry name" value="AAA_22"/>
    <property type="match status" value="1"/>
</dbReference>
<dbReference type="Pfam" id="PF09079">
    <property type="entry name" value="Cdc6_C"/>
    <property type="match status" value="1"/>
</dbReference>
<dbReference type="Pfam" id="PF22703">
    <property type="entry name" value="Cdc6_lid"/>
    <property type="match status" value="1"/>
</dbReference>
<dbReference type="SMART" id="SM00382">
    <property type="entry name" value="AAA"/>
    <property type="match status" value="1"/>
</dbReference>
<dbReference type="SMART" id="SM01074">
    <property type="entry name" value="Cdc6_C"/>
    <property type="match status" value="1"/>
</dbReference>
<dbReference type="SUPFAM" id="SSF52540">
    <property type="entry name" value="P-loop containing nucleoside triphosphate hydrolases"/>
    <property type="match status" value="1"/>
</dbReference>
<dbReference type="SUPFAM" id="SSF46785">
    <property type="entry name" value="Winged helix' DNA-binding domain"/>
    <property type="match status" value="1"/>
</dbReference>
<sequence>MDNPFSKFTNSRTIQADLSLLEENYIPDSFPHREKQINDMVTILSSIMRNSRPSNIIVYGKTGTGKTSTTKYVTRMLQEATSNVEVIYVNCEIYDSPYSILVYVANFAGGEKIPELGWPVDRIYREAVDRINGTGKFFVIVLDEMDRLIKKSGGDSLYVLLKLMTDVENVKVSMIGITNDTTLLENLDSRIKSRLNQESIVFPPYNATEIRDIIASRLEKVFGPGVVDDTAINLCAAIGAQEHGDARKAIDLMRIAIEIAIRENRLKVTEKEVYEARDKYEMNVMHEAINTLPIHSKIVLLSAIVTQEIEPNSVITGEIYENYRRICEDLGFTPLTPRRISDLLTELSDYGLIVVDERNMGKYGRTRGFSVVKEIETIKKYLMEDENLSMFKTSKMTKQARFDS</sequence>
<comment type="function">
    <text evidence="1">Involved in regulation of DNA replication.</text>
</comment>
<comment type="similarity">
    <text evidence="1">Belongs to the CDC6/cdc18 family.</text>
</comment>
<comment type="sequence caution" evidence="2">
    <conflict type="erroneous initiation">
        <sequence resource="EMBL-CDS" id="BAB59911"/>
    </conflict>
    <text>Extended N-terminus.</text>
</comment>
<proteinExistence type="inferred from homology"/>
<keyword id="KW-0067">ATP-binding</keyword>
<keyword id="KW-0235">DNA replication</keyword>
<keyword id="KW-0547">Nucleotide-binding</keyword>
<protein>
    <recommendedName>
        <fullName evidence="1">ORC1-type DNA replication protein</fullName>
    </recommendedName>
</protein>
<gene>
    <name type="primary">cdc6</name>
    <name type="ordered locus">TV0769</name>
    <name type="ORF">TVG0773033</name>
</gene>
<accession>Q97AP1</accession>
<organism>
    <name type="scientific">Thermoplasma volcanium (strain ATCC 51530 / DSM 4299 / JCM 9571 / NBRC 15438 / GSS1)</name>
    <dbReference type="NCBI Taxonomy" id="273116"/>
    <lineage>
        <taxon>Archaea</taxon>
        <taxon>Methanobacteriati</taxon>
        <taxon>Thermoplasmatota</taxon>
        <taxon>Thermoplasmata</taxon>
        <taxon>Thermoplasmatales</taxon>
        <taxon>Thermoplasmataceae</taxon>
        <taxon>Thermoplasma</taxon>
    </lineage>
</organism>
<reference key="1">
    <citation type="journal article" date="2000" name="Proc. Natl. Acad. Sci. U.S.A.">
        <title>Archaeal adaptation to higher temperatures revealed by genomic sequence of Thermoplasma volcanium.</title>
        <authorList>
            <person name="Kawashima T."/>
            <person name="Amano N."/>
            <person name="Koike H."/>
            <person name="Makino S."/>
            <person name="Higuchi S."/>
            <person name="Kawashima-Ohya Y."/>
            <person name="Watanabe K."/>
            <person name="Yamazaki M."/>
            <person name="Kanehori K."/>
            <person name="Kawamoto T."/>
            <person name="Nunoshiba T."/>
            <person name="Yamamoto Y."/>
            <person name="Aramaki H."/>
            <person name="Makino K."/>
            <person name="Suzuki M."/>
        </authorList>
    </citation>
    <scope>NUCLEOTIDE SEQUENCE [LARGE SCALE GENOMIC DNA]</scope>
    <source>
        <strain>ATCC 51530 / DSM 4299 / JCM 9571 / NBRC 15438 / GSS1</strain>
    </source>
</reference>
<evidence type="ECO:0000255" key="1">
    <source>
        <dbReference type="HAMAP-Rule" id="MF_01407"/>
    </source>
</evidence>
<evidence type="ECO:0000305" key="2"/>